<proteinExistence type="inferred from homology"/>
<protein>
    <recommendedName>
        <fullName evidence="1">Large ribosomal subunit protein bL12</fullName>
    </recommendedName>
    <alternativeName>
        <fullName evidence="2">50S ribosomal protein L7/L12</fullName>
    </alternativeName>
</protein>
<organism>
    <name type="scientific">Escherichia coli (strain SMS-3-5 / SECEC)</name>
    <dbReference type="NCBI Taxonomy" id="439855"/>
    <lineage>
        <taxon>Bacteria</taxon>
        <taxon>Pseudomonadati</taxon>
        <taxon>Pseudomonadota</taxon>
        <taxon>Gammaproteobacteria</taxon>
        <taxon>Enterobacterales</taxon>
        <taxon>Enterobacteriaceae</taxon>
        <taxon>Escherichia</taxon>
    </lineage>
</organism>
<accession>B1LNT8</accession>
<feature type="chain" id="PRO_1000121436" description="Large ribosomal subunit protein bL12">
    <location>
        <begin position="1"/>
        <end position="121"/>
    </location>
</feature>
<sequence>MSITKDQIIEAVAAMSVMDVVELISAMEEKFGVSAAAAVAVAAGPVEAAEEKTEFDVILKAAGANKVAVIKAVRGATGLGLKEAKDLVESAPAALKEGVSKDDAEALKKALEEAGAEVEVK</sequence>
<dbReference type="EMBL" id="CP000970">
    <property type="protein sequence ID" value="ACB17570.1"/>
    <property type="molecule type" value="Genomic_DNA"/>
</dbReference>
<dbReference type="RefSeq" id="WP_000028878.1">
    <property type="nucleotide sequence ID" value="NC_010498.1"/>
</dbReference>
<dbReference type="SMR" id="B1LNT8"/>
<dbReference type="GeneID" id="86944525"/>
<dbReference type="KEGG" id="ecm:EcSMS35_4434"/>
<dbReference type="HOGENOM" id="CLU_086499_3_2_6"/>
<dbReference type="Proteomes" id="UP000007011">
    <property type="component" value="Chromosome"/>
</dbReference>
<dbReference type="GO" id="GO:0022625">
    <property type="term" value="C:cytosolic large ribosomal subunit"/>
    <property type="evidence" value="ECO:0007669"/>
    <property type="project" value="TreeGrafter"/>
</dbReference>
<dbReference type="GO" id="GO:0003729">
    <property type="term" value="F:mRNA binding"/>
    <property type="evidence" value="ECO:0007669"/>
    <property type="project" value="TreeGrafter"/>
</dbReference>
<dbReference type="GO" id="GO:0003735">
    <property type="term" value="F:structural constituent of ribosome"/>
    <property type="evidence" value="ECO:0007669"/>
    <property type="project" value="InterPro"/>
</dbReference>
<dbReference type="GO" id="GO:0006412">
    <property type="term" value="P:translation"/>
    <property type="evidence" value="ECO:0007669"/>
    <property type="project" value="UniProtKB-UniRule"/>
</dbReference>
<dbReference type="CDD" id="cd00387">
    <property type="entry name" value="Ribosomal_L7_L12"/>
    <property type="match status" value="1"/>
</dbReference>
<dbReference type="FunFam" id="1.20.5.710:FF:000001">
    <property type="entry name" value="50S ribosomal protein L7/L12"/>
    <property type="match status" value="1"/>
</dbReference>
<dbReference type="FunFam" id="3.30.1390.10:FF:000001">
    <property type="entry name" value="50S ribosomal protein L7/L12"/>
    <property type="match status" value="1"/>
</dbReference>
<dbReference type="Gene3D" id="3.30.1390.10">
    <property type="match status" value="1"/>
</dbReference>
<dbReference type="Gene3D" id="1.20.5.710">
    <property type="entry name" value="Single helix bin"/>
    <property type="match status" value="1"/>
</dbReference>
<dbReference type="HAMAP" id="MF_00368">
    <property type="entry name" value="Ribosomal_bL12"/>
    <property type="match status" value="1"/>
</dbReference>
<dbReference type="InterPro" id="IPR000206">
    <property type="entry name" value="Ribosomal_bL12"/>
</dbReference>
<dbReference type="InterPro" id="IPR013823">
    <property type="entry name" value="Ribosomal_bL12_C"/>
</dbReference>
<dbReference type="InterPro" id="IPR014719">
    <property type="entry name" value="Ribosomal_bL12_C/ClpS-like"/>
</dbReference>
<dbReference type="InterPro" id="IPR008932">
    <property type="entry name" value="Ribosomal_bL12_oligo"/>
</dbReference>
<dbReference type="InterPro" id="IPR036235">
    <property type="entry name" value="Ribosomal_bL12_oligo_N_sf"/>
</dbReference>
<dbReference type="NCBIfam" id="TIGR00855">
    <property type="entry name" value="L12"/>
    <property type="match status" value="1"/>
</dbReference>
<dbReference type="PANTHER" id="PTHR45987">
    <property type="entry name" value="39S RIBOSOMAL PROTEIN L12"/>
    <property type="match status" value="1"/>
</dbReference>
<dbReference type="PANTHER" id="PTHR45987:SF4">
    <property type="entry name" value="LARGE RIBOSOMAL SUBUNIT PROTEIN BL12M"/>
    <property type="match status" value="1"/>
</dbReference>
<dbReference type="Pfam" id="PF00542">
    <property type="entry name" value="Ribosomal_L12"/>
    <property type="match status" value="1"/>
</dbReference>
<dbReference type="Pfam" id="PF16320">
    <property type="entry name" value="Ribosomal_L12_N"/>
    <property type="match status" value="1"/>
</dbReference>
<dbReference type="SUPFAM" id="SSF54736">
    <property type="entry name" value="ClpS-like"/>
    <property type="match status" value="1"/>
</dbReference>
<dbReference type="SUPFAM" id="SSF48300">
    <property type="entry name" value="Ribosomal protein L7/12, oligomerisation (N-terminal) domain"/>
    <property type="match status" value="1"/>
</dbReference>
<comment type="function">
    <text evidence="1">Forms part of the ribosomal stalk which helps the ribosome interact with GTP-bound translation factors. Is thus essential for accurate translation.</text>
</comment>
<comment type="subunit">
    <text evidence="1">Homodimer. Part of the ribosomal stalk of the 50S ribosomal subunit. Forms a multimeric L10(L12)X complex, where L10 forms an elongated spine to which 2 to 4 L12 dimers bind in a sequential fashion. Binds GTP-bound translation factors.</text>
</comment>
<comment type="similarity">
    <text evidence="1">Belongs to the bacterial ribosomal protein bL12 family.</text>
</comment>
<keyword id="KW-0687">Ribonucleoprotein</keyword>
<keyword id="KW-0689">Ribosomal protein</keyword>
<evidence type="ECO:0000255" key="1">
    <source>
        <dbReference type="HAMAP-Rule" id="MF_00368"/>
    </source>
</evidence>
<evidence type="ECO:0000305" key="2"/>
<reference key="1">
    <citation type="journal article" date="2008" name="J. Bacteriol.">
        <title>Insights into the environmental resistance gene pool from the genome sequence of the multidrug-resistant environmental isolate Escherichia coli SMS-3-5.</title>
        <authorList>
            <person name="Fricke W.F."/>
            <person name="Wright M.S."/>
            <person name="Lindell A.H."/>
            <person name="Harkins D.M."/>
            <person name="Baker-Austin C."/>
            <person name="Ravel J."/>
            <person name="Stepanauskas R."/>
        </authorList>
    </citation>
    <scope>NUCLEOTIDE SEQUENCE [LARGE SCALE GENOMIC DNA]</scope>
    <source>
        <strain>SMS-3-5 / SECEC</strain>
    </source>
</reference>
<name>RL7_ECOSM</name>
<gene>
    <name evidence="1" type="primary">rplL</name>
    <name type="ordered locus">EcSMS35_4434</name>
</gene>